<accession>Q2YTK0</accession>
<dbReference type="EC" id="4.1.1.49" evidence="1"/>
<dbReference type="EMBL" id="AJ938182">
    <property type="protein sequence ID" value="CAI81335.1"/>
    <property type="molecule type" value="Genomic_DNA"/>
</dbReference>
<dbReference type="RefSeq" id="WP_000109916.1">
    <property type="nucleotide sequence ID" value="NC_007622.1"/>
</dbReference>
<dbReference type="SMR" id="Q2YTK0"/>
<dbReference type="KEGG" id="sab:SAB1646"/>
<dbReference type="HOGENOM" id="CLU_018247_0_1_9"/>
<dbReference type="UniPathway" id="UPA00138"/>
<dbReference type="GO" id="GO:0005829">
    <property type="term" value="C:cytosol"/>
    <property type="evidence" value="ECO:0007669"/>
    <property type="project" value="TreeGrafter"/>
</dbReference>
<dbReference type="GO" id="GO:0005524">
    <property type="term" value="F:ATP binding"/>
    <property type="evidence" value="ECO:0007669"/>
    <property type="project" value="UniProtKB-UniRule"/>
</dbReference>
<dbReference type="GO" id="GO:0046872">
    <property type="term" value="F:metal ion binding"/>
    <property type="evidence" value="ECO:0007669"/>
    <property type="project" value="UniProtKB-KW"/>
</dbReference>
<dbReference type="GO" id="GO:0004612">
    <property type="term" value="F:phosphoenolpyruvate carboxykinase (ATP) activity"/>
    <property type="evidence" value="ECO:0007669"/>
    <property type="project" value="UniProtKB-UniRule"/>
</dbReference>
<dbReference type="GO" id="GO:0006094">
    <property type="term" value="P:gluconeogenesis"/>
    <property type="evidence" value="ECO:0007669"/>
    <property type="project" value="UniProtKB-UniRule"/>
</dbReference>
<dbReference type="CDD" id="cd00484">
    <property type="entry name" value="PEPCK_ATP"/>
    <property type="match status" value="1"/>
</dbReference>
<dbReference type="FunFam" id="2.170.8.10:FF:000001">
    <property type="entry name" value="Phosphoenolpyruvate carboxykinase (ATP)"/>
    <property type="match status" value="1"/>
</dbReference>
<dbReference type="FunFam" id="3.40.449.10:FF:000001">
    <property type="entry name" value="Phosphoenolpyruvate carboxykinase (ATP)"/>
    <property type="match status" value="1"/>
</dbReference>
<dbReference type="Gene3D" id="3.90.228.20">
    <property type="match status" value="1"/>
</dbReference>
<dbReference type="Gene3D" id="3.40.449.10">
    <property type="entry name" value="Phosphoenolpyruvate Carboxykinase, domain 1"/>
    <property type="match status" value="1"/>
</dbReference>
<dbReference type="Gene3D" id="2.170.8.10">
    <property type="entry name" value="Phosphoenolpyruvate Carboxykinase, domain 2"/>
    <property type="match status" value="1"/>
</dbReference>
<dbReference type="HAMAP" id="MF_00453">
    <property type="entry name" value="PEPCK_ATP"/>
    <property type="match status" value="1"/>
</dbReference>
<dbReference type="InterPro" id="IPR001272">
    <property type="entry name" value="PEP_carboxykinase_ATP"/>
</dbReference>
<dbReference type="InterPro" id="IPR013035">
    <property type="entry name" value="PEP_carboxykinase_C"/>
</dbReference>
<dbReference type="InterPro" id="IPR008210">
    <property type="entry name" value="PEP_carboxykinase_N"/>
</dbReference>
<dbReference type="InterPro" id="IPR015994">
    <property type="entry name" value="PEPCK_ATP_CS"/>
</dbReference>
<dbReference type="NCBIfam" id="TIGR00224">
    <property type="entry name" value="pckA"/>
    <property type="match status" value="1"/>
</dbReference>
<dbReference type="NCBIfam" id="NF006820">
    <property type="entry name" value="PRK09344.1-2"/>
    <property type="match status" value="1"/>
</dbReference>
<dbReference type="NCBIfam" id="NF006821">
    <property type="entry name" value="PRK09344.1-3"/>
    <property type="match status" value="1"/>
</dbReference>
<dbReference type="PANTHER" id="PTHR30031:SF0">
    <property type="entry name" value="PHOSPHOENOLPYRUVATE CARBOXYKINASE (ATP)"/>
    <property type="match status" value="1"/>
</dbReference>
<dbReference type="PANTHER" id="PTHR30031">
    <property type="entry name" value="PHOSPHOENOLPYRUVATE CARBOXYKINASE ATP"/>
    <property type="match status" value="1"/>
</dbReference>
<dbReference type="Pfam" id="PF01293">
    <property type="entry name" value="PEPCK_ATP"/>
    <property type="match status" value="1"/>
</dbReference>
<dbReference type="PIRSF" id="PIRSF006294">
    <property type="entry name" value="PEP_crbxkin"/>
    <property type="match status" value="1"/>
</dbReference>
<dbReference type="SUPFAM" id="SSF68923">
    <property type="entry name" value="PEP carboxykinase N-terminal domain"/>
    <property type="match status" value="1"/>
</dbReference>
<dbReference type="SUPFAM" id="SSF53795">
    <property type="entry name" value="PEP carboxykinase-like"/>
    <property type="match status" value="1"/>
</dbReference>
<dbReference type="PROSITE" id="PS00532">
    <property type="entry name" value="PEPCK_ATP"/>
    <property type="match status" value="1"/>
</dbReference>
<feature type="chain" id="PRO_0000236948" description="Phosphoenolpyruvate carboxykinase (ATP)">
    <location>
        <begin position="1"/>
        <end position="530"/>
    </location>
</feature>
<feature type="binding site" evidence="1">
    <location>
        <position position="58"/>
    </location>
    <ligand>
        <name>substrate</name>
    </ligand>
</feature>
<feature type="binding site" evidence="1">
    <location>
        <position position="195"/>
    </location>
    <ligand>
        <name>substrate</name>
    </ligand>
</feature>
<feature type="binding site" evidence="1">
    <location>
        <position position="201"/>
    </location>
    <ligand>
        <name>ATP</name>
        <dbReference type="ChEBI" id="CHEBI:30616"/>
    </ligand>
</feature>
<feature type="binding site" evidence="1">
    <location>
        <position position="201"/>
    </location>
    <ligand>
        <name>Mn(2+)</name>
        <dbReference type="ChEBI" id="CHEBI:29035"/>
    </ligand>
</feature>
<feature type="binding site" evidence="1">
    <location>
        <position position="201"/>
    </location>
    <ligand>
        <name>substrate</name>
    </ligand>
</feature>
<feature type="binding site" evidence="1">
    <location>
        <position position="220"/>
    </location>
    <ligand>
        <name>ATP</name>
        <dbReference type="ChEBI" id="CHEBI:30616"/>
    </ligand>
</feature>
<feature type="binding site" evidence="1">
    <location>
        <position position="220"/>
    </location>
    <ligand>
        <name>Mn(2+)</name>
        <dbReference type="ChEBI" id="CHEBI:29035"/>
    </ligand>
</feature>
<feature type="binding site" evidence="1">
    <location>
        <begin position="236"/>
        <end position="244"/>
    </location>
    <ligand>
        <name>ATP</name>
        <dbReference type="ChEBI" id="CHEBI:30616"/>
    </ligand>
</feature>
<feature type="binding site" evidence="1">
    <location>
        <position position="257"/>
    </location>
    <ligand>
        <name>Mn(2+)</name>
        <dbReference type="ChEBI" id="CHEBI:29035"/>
    </ligand>
</feature>
<feature type="binding site" evidence="1">
    <location>
        <position position="285"/>
    </location>
    <ligand>
        <name>ATP</name>
        <dbReference type="ChEBI" id="CHEBI:30616"/>
    </ligand>
</feature>
<feature type="binding site" evidence="1">
    <location>
        <position position="321"/>
    </location>
    <ligand>
        <name>ATP</name>
        <dbReference type="ChEBI" id="CHEBI:30616"/>
    </ligand>
</feature>
<feature type="binding site" evidence="1">
    <location>
        <position position="321"/>
    </location>
    <ligand>
        <name>substrate</name>
    </ligand>
</feature>
<feature type="binding site" evidence="1">
    <location>
        <begin position="440"/>
        <end position="441"/>
    </location>
    <ligand>
        <name>ATP</name>
        <dbReference type="ChEBI" id="CHEBI:30616"/>
    </ligand>
</feature>
<feature type="binding site" evidence="1">
    <location>
        <position position="446"/>
    </location>
    <ligand>
        <name>ATP</name>
        <dbReference type="ChEBI" id="CHEBI:30616"/>
    </ligand>
</feature>
<gene>
    <name evidence="1" type="primary">pckA</name>
    <name type="ordered locus">SAB1646</name>
</gene>
<protein>
    <recommendedName>
        <fullName evidence="1">Phosphoenolpyruvate carboxykinase (ATP)</fullName>
        <shortName evidence="1">PCK</shortName>
        <shortName evidence="1">PEP carboxykinase</shortName>
        <shortName evidence="1">PEPCK</shortName>
        <ecNumber evidence="1">4.1.1.49</ecNumber>
    </recommendedName>
</protein>
<comment type="function">
    <text evidence="1">Involved in the gluconeogenesis. Catalyzes the conversion of oxaloacetate (OAA) to phosphoenolpyruvate (PEP) through direct phosphoryl transfer between the nucleoside triphosphate and OAA.</text>
</comment>
<comment type="catalytic activity">
    <reaction evidence="1">
        <text>oxaloacetate + ATP = phosphoenolpyruvate + ADP + CO2</text>
        <dbReference type="Rhea" id="RHEA:18617"/>
        <dbReference type="ChEBI" id="CHEBI:16452"/>
        <dbReference type="ChEBI" id="CHEBI:16526"/>
        <dbReference type="ChEBI" id="CHEBI:30616"/>
        <dbReference type="ChEBI" id="CHEBI:58702"/>
        <dbReference type="ChEBI" id="CHEBI:456216"/>
        <dbReference type="EC" id="4.1.1.49"/>
    </reaction>
</comment>
<comment type="cofactor">
    <cofactor evidence="1">
        <name>Mn(2+)</name>
        <dbReference type="ChEBI" id="CHEBI:29035"/>
    </cofactor>
    <text evidence="1">Binds 1 Mn(2+) ion per subunit.</text>
</comment>
<comment type="pathway">
    <text evidence="1">Carbohydrate biosynthesis; gluconeogenesis.</text>
</comment>
<comment type="subcellular location">
    <subcellularLocation>
        <location evidence="1">Cytoplasm</location>
    </subcellularLocation>
</comment>
<comment type="similarity">
    <text evidence="1">Belongs to the phosphoenolpyruvate carboxykinase (ATP) family.</text>
</comment>
<evidence type="ECO:0000255" key="1">
    <source>
        <dbReference type="HAMAP-Rule" id="MF_00453"/>
    </source>
</evidence>
<organism>
    <name type="scientific">Staphylococcus aureus (strain bovine RF122 / ET3-1)</name>
    <dbReference type="NCBI Taxonomy" id="273036"/>
    <lineage>
        <taxon>Bacteria</taxon>
        <taxon>Bacillati</taxon>
        <taxon>Bacillota</taxon>
        <taxon>Bacilli</taxon>
        <taxon>Bacillales</taxon>
        <taxon>Staphylococcaceae</taxon>
        <taxon>Staphylococcus</taxon>
    </lineage>
</organism>
<proteinExistence type="inferred from homology"/>
<keyword id="KW-0067">ATP-binding</keyword>
<keyword id="KW-0963">Cytoplasm</keyword>
<keyword id="KW-0210">Decarboxylase</keyword>
<keyword id="KW-0312">Gluconeogenesis</keyword>
<keyword id="KW-0456">Lyase</keyword>
<keyword id="KW-0464">Manganese</keyword>
<keyword id="KW-0479">Metal-binding</keyword>
<keyword id="KW-0547">Nucleotide-binding</keyword>
<sequence>MSVDTYTETTKIDKLLKKPTSHFQLSTTQLYNKILDNNEGVLTELGAVNASTGKYTGRSPKDKFFVSEPSYRDNIDWGEINQPIDEETFLKLYHKVLDYLDKKDELYVFKGYAGSDKDTMLKLTVINELAWHNLFAKNMFIRPESKEEATKIKPNFTIVSVPHFKADPEVDGTKSETFVIISFKHKVILIGGTEYAGEMKKGIFSVMNYLLPMQDIMSMHCSANVGEKGDVALFFGLSGTGKTTLSADPHRKLIGDDEHGWNKNGVFNIEGGCYAKAINLSKEKEPQIFDAIKYGAILENTVVAEDGSVDFEDNRYTENTRAAYPINHIDNIVVPSKAAHPNTIIFLTADAFGVIPPISKLNKDQAMYHFLSGFTSKLAGTERGVTEPEPSFSTCFGAPFFPLHPTVYADLLGELIDLHDVDVYLVNTGWTGGKYGVGRRISLHYTRQMVNQAISGKLKNAEYTKDSTFGLSIPVEIEDVPKTILNPINAWSDKEKYKAQAEDLIQRFEKNFEKFGEKVEHIAKKGSFNK</sequence>
<reference key="1">
    <citation type="journal article" date="2007" name="PLoS ONE">
        <title>Molecular correlates of host specialization in Staphylococcus aureus.</title>
        <authorList>
            <person name="Herron-Olson L."/>
            <person name="Fitzgerald J.R."/>
            <person name="Musser J.M."/>
            <person name="Kapur V."/>
        </authorList>
    </citation>
    <scope>NUCLEOTIDE SEQUENCE [LARGE SCALE GENOMIC DNA]</scope>
    <source>
        <strain>bovine RF122 / ET3-1</strain>
    </source>
</reference>
<name>PCKA_STAAB</name>